<name>RL17_RALPJ</name>
<evidence type="ECO:0000255" key="1">
    <source>
        <dbReference type="HAMAP-Rule" id="MF_01368"/>
    </source>
</evidence>
<evidence type="ECO:0000305" key="2"/>
<protein>
    <recommendedName>
        <fullName evidence="1">Large ribosomal subunit protein bL17</fullName>
    </recommendedName>
    <alternativeName>
        <fullName evidence="2">50S ribosomal protein L17</fullName>
    </alternativeName>
</protein>
<organism>
    <name type="scientific">Ralstonia pickettii (strain 12J)</name>
    <dbReference type="NCBI Taxonomy" id="402626"/>
    <lineage>
        <taxon>Bacteria</taxon>
        <taxon>Pseudomonadati</taxon>
        <taxon>Pseudomonadota</taxon>
        <taxon>Betaproteobacteria</taxon>
        <taxon>Burkholderiales</taxon>
        <taxon>Burkholderiaceae</taxon>
        <taxon>Ralstonia</taxon>
    </lineage>
</organism>
<keyword id="KW-0687">Ribonucleoprotein</keyword>
<keyword id="KW-0689">Ribosomal protein</keyword>
<gene>
    <name evidence="1" type="primary">rplQ</name>
    <name type="ordered locus">Rpic_3270</name>
</gene>
<dbReference type="EMBL" id="CP001068">
    <property type="protein sequence ID" value="ACD28392.1"/>
    <property type="molecule type" value="Genomic_DNA"/>
</dbReference>
<dbReference type="SMR" id="B2UEJ2"/>
<dbReference type="STRING" id="402626.Rpic_3270"/>
<dbReference type="KEGG" id="rpi:Rpic_3270"/>
<dbReference type="eggNOG" id="COG0203">
    <property type="taxonomic scope" value="Bacteria"/>
</dbReference>
<dbReference type="HOGENOM" id="CLU_074407_2_2_4"/>
<dbReference type="GO" id="GO:0022625">
    <property type="term" value="C:cytosolic large ribosomal subunit"/>
    <property type="evidence" value="ECO:0007669"/>
    <property type="project" value="TreeGrafter"/>
</dbReference>
<dbReference type="GO" id="GO:0003735">
    <property type="term" value="F:structural constituent of ribosome"/>
    <property type="evidence" value="ECO:0007669"/>
    <property type="project" value="InterPro"/>
</dbReference>
<dbReference type="GO" id="GO:0006412">
    <property type="term" value="P:translation"/>
    <property type="evidence" value="ECO:0007669"/>
    <property type="project" value="UniProtKB-UniRule"/>
</dbReference>
<dbReference type="FunFam" id="3.90.1030.10:FF:000001">
    <property type="entry name" value="50S ribosomal protein L17"/>
    <property type="match status" value="1"/>
</dbReference>
<dbReference type="Gene3D" id="3.90.1030.10">
    <property type="entry name" value="Ribosomal protein L17"/>
    <property type="match status" value="1"/>
</dbReference>
<dbReference type="HAMAP" id="MF_01368">
    <property type="entry name" value="Ribosomal_bL17"/>
    <property type="match status" value="1"/>
</dbReference>
<dbReference type="InterPro" id="IPR000456">
    <property type="entry name" value="Ribosomal_bL17"/>
</dbReference>
<dbReference type="InterPro" id="IPR047859">
    <property type="entry name" value="Ribosomal_bL17_CS"/>
</dbReference>
<dbReference type="InterPro" id="IPR036373">
    <property type="entry name" value="Ribosomal_bL17_sf"/>
</dbReference>
<dbReference type="NCBIfam" id="TIGR00059">
    <property type="entry name" value="L17"/>
    <property type="match status" value="1"/>
</dbReference>
<dbReference type="PANTHER" id="PTHR14413:SF16">
    <property type="entry name" value="LARGE RIBOSOMAL SUBUNIT PROTEIN BL17M"/>
    <property type="match status" value="1"/>
</dbReference>
<dbReference type="PANTHER" id="PTHR14413">
    <property type="entry name" value="RIBOSOMAL PROTEIN L17"/>
    <property type="match status" value="1"/>
</dbReference>
<dbReference type="Pfam" id="PF01196">
    <property type="entry name" value="Ribosomal_L17"/>
    <property type="match status" value="1"/>
</dbReference>
<dbReference type="SUPFAM" id="SSF64263">
    <property type="entry name" value="Prokaryotic ribosomal protein L17"/>
    <property type="match status" value="1"/>
</dbReference>
<dbReference type="PROSITE" id="PS01167">
    <property type="entry name" value="RIBOSOMAL_L17"/>
    <property type="match status" value="1"/>
</dbReference>
<accession>B2UEJ2</accession>
<reference key="1">
    <citation type="submission" date="2008-05" db="EMBL/GenBank/DDBJ databases">
        <title>Complete sequence of chromosome 1 of Ralstonia pickettii 12J.</title>
        <authorList>
            <person name="Lucas S."/>
            <person name="Copeland A."/>
            <person name="Lapidus A."/>
            <person name="Glavina del Rio T."/>
            <person name="Dalin E."/>
            <person name="Tice H."/>
            <person name="Bruce D."/>
            <person name="Goodwin L."/>
            <person name="Pitluck S."/>
            <person name="Meincke L."/>
            <person name="Brettin T."/>
            <person name="Detter J.C."/>
            <person name="Han C."/>
            <person name="Kuske C.R."/>
            <person name="Schmutz J."/>
            <person name="Larimer F."/>
            <person name="Land M."/>
            <person name="Hauser L."/>
            <person name="Kyrpides N."/>
            <person name="Mikhailova N."/>
            <person name="Marsh T."/>
            <person name="Richardson P."/>
        </authorList>
    </citation>
    <scope>NUCLEOTIDE SEQUENCE [LARGE SCALE GENOMIC DNA]</scope>
    <source>
        <strain>12J</strain>
    </source>
</reference>
<sequence length="132" mass="15056">MRHRHGLRKLNRTSSHRLAMLRNMSNSLLQHELIKTTVPKAKELRKVVEPLITLAKKDTVANRRLAFARLRDRDMVTKLFNELGPRFATRPGGYTRILKFGFRQGDNAPMALVELLDRPEVAEAVEVDGAAE</sequence>
<feature type="chain" id="PRO_1000144470" description="Large ribosomal subunit protein bL17">
    <location>
        <begin position="1"/>
        <end position="132"/>
    </location>
</feature>
<proteinExistence type="inferred from homology"/>
<comment type="subunit">
    <text evidence="1">Part of the 50S ribosomal subunit. Contacts protein L32.</text>
</comment>
<comment type="similarity">
    <text evidence="1">Belongs to the bacterial ribosomal protein bL17 family.</text>
</comment>